<proteinExistence type="inferred from homology"/>
<feature type="chain" id="PRO_1000021781" description="Adenylate kinase">
    <location>
        <begin position="1"/>
        <end position="216"/>
    </location>
</feature>
<feature type="region of interest" description="NMP" evidence="1">
    <location>
        <begin position="30"/>
        <end position="59"/>
    </location>
</feature>
<feature type="region of interest" description="LID" evidence="1">
    <location>
        <begin position="126"/>
        <end position="163"/>
    </location>
</feature>
<feature type="binding site" evidence="1">
    <location>
        <begin position="10"/>
        <end position="15"/>
    </location>
    <ligand>
        <name>ATP</name>
        <dbReference type="ChEBI" id="CHEBI:30616"/>
    </ligand>
</feature>
<feature type="binding site" evidence="1">
    <location>
        <position position="31"/>
    </location>
    <ligand>
        <name>AMP</name>
        <dbReference type="ChEBI" id="CHEBI:456215"/>
    </ligand>
</feature>
<feature type="binding site" evidence="1">
    <location>
        <position position="36"/>
    </location>
    <ligand>
        <name>AMP</name>
        <dbReference type="ChEBI" id="CHEBI:456215"/>
    </ligand>
</feature>
<feature type="binding site" evidence="1">
    <location>
        <begin position="57"/>
        <end position="59"/>
    </location>
    <ligand>
        <name>AMP</name>
        <dbReference type="ChEBI" id="CHEBI:456215"/>
    </ligand>
</feature>
<feature type="binding site" evidence="1">
    <location>
        <begin position="85"/>
        <end position="88"/>
    </location>
    <ligand>
        <name>AMP</name>
        <dbReference type="ChEBI" id="CHEBI:456215"/>
    </ligand>
</feature>
<feature type="binding site" evidence="1">
    <location>
        <position position="92"/>
    </location>
    <ligand>
        <name>AMP</name>
        <dbReference type="ChEBI" id="CHEBI:456215"/>
    </ligand>
</feature>
<feature type="binding site" evidence="1">
    <location>
        <position position="127"/>
    </location>
    <ligand>
        <name>ATP</name>
        <dbReference type="ChEBI" id="CHEBI:30616"/>
    </ligand>
</feature>
<feature type="binding site" evidence="1">
    <location>
        <position position="130"/>
    </location>
    <ligand>
        <name>Zn(2+)</name>
        <dbReference type="ChEBI" id="CHEBI:29105"/>
        <note>structural</note>
    </ligand>
</feature>
<feature type="binding site" evidence="1">
    <location>
        <position position="133"/>
    </location>
    <ligand>
        <name>Zn(2+)</name>
        <dbReference type="ChEBI" id="CHEBI:29105"/>
        <note>structural</note>
    </ligand>
</feature>
<feature type="binding site" evidence="1">
    <location>
        <begin position="136"/>
        <end position="137"/>
    </location>
    <ligand>
        <name>ATP</name>
        <dbReference type="ChEBI" id="CHEBI:30616"/>
    </ligand>
</feature>
<feature type="binding site" evidence="1">
    <location>
        <position position="150"/>
    </location>
    <ligand>
        <name>Zn(2+)</name>
        <dbReference type="ChEBI" id="CHEBI:29105"/>
        <note>structural</note>
    </ligand>
</feature>
<feature type="binding site" evidence="1">
    <location>
        <position position="153"/>
    </location>
    <ligand>
        <name>Zn(2+)</name>
        <dbReference type="ChEBI" id="CHEBI:29105"/>
        <note>structural</note>
    </ligand>
</feature>
<feature type="binding site" evidence="1">
    <location>
        <position position="160"/>
    </location>
    <ligand>
        <name>AMP</name>
        <dbReference type="ChEBI" id="CHEBI:456215"/>
    </ligand>
</feature>
<feature type="binding site" evidence="1">
    <location>
        <position position="171"/>
    </location>
    <ligand>
        <name>AMP</name>
        <dbReference type="ChEBI" id="CHEBI:456215"/>
    </ligand>
</feature>
<feature type="binding site" evidence="1">
    <location>
        <position position="199"/>
    </location>
    <ligand>
        <name>ATP</name>
        <dbReference type="ChEBI" id="CHEBI:30616"/>
    </ligand>
</feature>
<dbReference type="EC" id="2.7.4.3" evidence="1"/>
<dbReference type="EMBL" id="AM114193">
    <property type="protein sequence ID" value="CAJ37629.1"/>
    <property type="molecule type" value="Genomic_DNA"/>
</dbReference>
<dbReference type="RefSeq" id="WP_012034956.1">
    <property type="nucleotide sequence ID" value="NC_009464.1"/>
</dbReference>
<dbReference type="SMR" id="Q0W1W4"/>
<dbReference type="STRING" id="351160.RCIX2570"/>
<dbReference type="GeneID" id="5142682"/>
<dbReference type="KEGG" id="rci:RCIX2570"/>
<dbReference type="PATRIC" id="fig|351160.9.peg.654"/>
<dbReference type="eggNOG" id="arCOG01046">
    <property type="taxonomic scope" value="Archaea"/>
</dbReference>
<dbReference type="OrthoDB" id="31230at2157"/>
<dbReference type="UniPathway" id="UPA00588">
    <property type="reaction ID" value="UER00649"/>
</dbReference>
<dbReference type="Proteomes" id="UP000000663">
    <property type="component" value="Chromosome"/>
</dbReference>
<dbReference type="GO" id="GO:0005737">
    <property type="term" value="C:cytoplasm"/>
    <property type="evidence" value="ECO:0007669"/>
    <property type="project" value="UniProtKB-SubCell"/>
</dbReference>
<dbReference type="GO" id="GO:0004017">
    <property type="term" value="F:adenylate kinase activity"/>
    <property type="evidence" value="ECO:0007669"/>
    <property type="project" value="UniProtKB-UniRule"/>
</dbReference>
<dbReference type="GO" id="GO:0005524">
    <property type="term" value="F:ATP binding"/>
    <property type="evidence" value="ECO:0007669"/>
    <property type="project" value="UniProtKB-UniRule"/>
</dbReference>
<dbReference type="GO" id="GO:0008270">
    <property type="term" value="F:zinc ion binding"/>
    <property type="evidence" value="ECO:0007669"/>
    <property type="project" value="UniProtKB-UniRule"/>
</dbReference>
<dbReference type="GO" id="GO:0044209">
    <property type="term" value="P:AMP salvage"/>
    <property type="evidence" value="ECO:0007669"/>
    <property type="project" value="UniProtKB-UniRule"/>
</dbReference>
<dbReference type="CDD" id="cd01428">
    <property type="entry name" value="ADK"/>
    <property type="match status" value="1"/>
</dbReference>
<dbReference type="FunFam" id="3.40.50.300:FF:000106">
    <property type="entry name" value="Adenylate kinase mitochondrial"/>
    <property type="match status" value="1"/>
</dbReference>
<dbReference type="Gene3D" id="3.40.50.300">
    <property type="entry name" value="P-loop containing nucleotide triphosphate hydrolases"/>
    <property type="match status" value="1"/>
</dbReference>
<dbReference type="HAMAP" id="MF_00235">
    <property type="entry name" value="Adenylate_kinase_Adk"/>
    <property type="match status" value="1"/>
</dbReference>
<dbReference type="InterPro" id="IPR006259">
    <property type="entry name" value="Adenyl_kin_sub"/>
</dbReference>
<dbReference type="InterPro" id="IPR000850">
    <property type="entry name" value="Adenylat/UMP-CMP_kin"/>
</dbReference>
<dbReference type="InterPro" id="IPR033690">
    <property type="entry name" value="Adenylat_kinase_CS"/>
</dbReference>
<dbReference type="InterPro" id="IPR007862">
    <property type="entry name" value="Adenylate_kinase_lid-dom"/>
</dbReference>
<dbReference type="InterPro" id="IPR027417">
    <property type="entry name" value="P-loop_NTPase"/>
</dbReference>
<dbReference type="NCBIfam" id="TIGR01351">
    <property type="entry name" value="adk"/>
    <property type="match status" value="1"/>
</dbReference>
<dbReference type="NCBIfam" id="NF001380">
    <property type="entry name" value="PRK00279.1-2"/>
    <property type="match status" value="1"/>
</dbReference>
<dbReference type="NCBIfam" id="NF001381">
    <property type="entry name" value="PRK00279.1-3"/>
    <property type="match status" value="1"/>
</dbReference>
<dbReference type="NCBIfam" id="NF011100">
    <property type="entry name" value="PRK14527.1"/>
    <property type="match status" value="1"/>
</dbReference>
<dbReference type="PANTHER" id="PTHR23359">
    <property type="entry name" value="NUCLEOTIDE KINASE"/>
    <property type="match status" value="1"/>
</dbReference>
<dbReference type="Pfam" id="PF00406">
    <property type="entry name" value="ADK"/>
    <property type="match status" value="1"/>
</dbReference>
<dbReference type="Pfam" id="PF05191">
    <property type="entry name" value="ADK_lid"/>
    <property type="match status" value="1"/>
</dbReference>
<dbReference type="PRINTS" id="PR00094">
    <property type="entry name" value="ADENYLTKNASE"/>
</dbReference>
<dbReference type="SUPFAM" id="SSF52540">
    <property type="entry name" value="P-loop containing nucleoside triphosphate hydrolases"/>
    <property type="match status" value="1"/>
</dbReference>
<dbReference type="PROSITE" id="PS00113">
    <property type="entry name" value="ADENYLATE_KINASE"/>
    <property type="match status" value="1"/>
</dbReference>
<accession>Q0W1W4</accession>
<reference key="1">
    <citation type="journal article" date="2006" name="Science">
        <title>Genome of rice cluster I archaea -- the key methane producers in the rice rhizosphere.</title>
        <authorList>
            <person name="Erkel C."/>
            <person name="Kube M."/>
            <person name="Reinhardt R."/>
            <person name="Liesack W."/>
        </authorList>
    </citation>
    <scope>NUCLEOTIDE SEQUENCE [LARGE SCALE GENOMIC DNA]</scope>
    <source>
        <strain>DSM 22066 / NBRC 105507 / MRE50</strain>
    </source>
</reference>
<protein>
    <recommendedName>
        <fullName evidence="1">Adenylate kinase</fullName>
        <shortName evidence="1">AK</shortName>
        <ecNumber evidence="1">2.7.4.3</ecNumber>
    </recommendedName>
    <alternativeName>
        <fullName evidence="1">ATP-AMP transphosphorylase</fullName>
    </alternativeName>
    <alternativeName>
        <fullName evidence="1">ATP:AMP phosphotransferase</fullName>
    </alternativeName>
    <alternativeName>
        <fullName evidence="1">Adenylate monophosphate kinase</fullName>
    </alternativeName>
</protein>
<comment type="function">
    <text evidence="1">Catalyzes the reversible transfer of the terminal phosphate group between ATP and AMP. Plays an important role in cellular energy homeostasis and in adenine nucleotide metabolism.</text>
</comment>
<comment type="catalytic activity">
    <reaction evidence="1">
        <text>AMP + ATP = 2 ADP</text>
        <dbReference type="Rhea" id="RHEA:12973"/>
        <dbReference type="ChEBI" id="CHEBI:30616"/>
        <dbReference type="ChEBI" id="CHEBI:456215"/>
        <dbReference type="ChEBI" id="CHEBI:456216"/>
        <dbReference type="EC" id="2.7.4.3"/>
    </reaction>
</comment>
<comment type="pathway">
    <text evidence="1">Purine metabolism; AMP biosynthesis via salvage pathway; AMP from ADP: step 1/1.</text>
</comment>
<comment type="subunit">
    <text evidence="1">Monomer.</text>
</comment>
<comment type="subcellular location">
    <subcellularLocation>
        <location evidence="1">Cytoplasm</location>
    </subcellularLocation>
</comment>
<comment type="domain">
    <text evidence="1">Consists of three domains, a large central CORE domain and two small peripheral domains, NMPbind and LID, which undergo movements during catalysis. The LID domain closes over the site of phosphoryl transfer upon ATP binding. Assembling and dissambling the active center during each catalytic cycle provides an effective means to prevent ATP hydrolysis. Some bacteria have evolved a zinc-coordinating structure that stabilizes the LID domain.</text>
</comment>
<comment type="similarity">
    <text evidence="1">Belongs to the adenylate kinase family.</text>
</comment>
<organism>
    <name type="scientific">Methanocella arvoryzae (strain DSM 22066 / NBRC 105507 / MRE50)</name>
    <dbReference type="NCBI Taxonomy" id="351160"/>
    <lineage>
        <taxon>Archaea</taxon>
        <taxon>Methanobacteriati</taxon>
        <taxon>Methanobacteriota</taxon>
        <taxon>Stenosarchaea group</taxon>
        <taxon>Methanomicrobia</taxon>
        <taxon>Methanocellales</taxon>
        <taxon>Methanocellaceae</taxon>
        <taxon>Methanocella</taxon>
    </lineage>
</organism>
<gene>
    <name evidence="1" type="primary">adk</name>
    <name type="ordered locus">UNCMA_06270</name>
    <name type="ORF">RCIX2570</name>
</gene>
<keyword id="KW-0067">ATP-binding</keyword>
<keyword id="KW-0963">Cytoplasm</keyword>
<keyword id="KW-0418">Kinase</keyword>
<keyword id="KW-0479">Metal-binding</keyword>
<keyword id="KW-0545">Nucleotide biosynthesis</keyword>
<keyword id="KW-0547">Nucleotide-binding</keyword>
<keyword id="KW-1185">Reference proteome</keyword>
<keyword id="KW-0808">Transferase</keyword>
<keyword id="KW-0862">Zinc</keyword>
<name>KAD_METAR</name>
<sequence length="216" mass="24029">MQFVLFGPPGAGKGTQAKFLSEELNVPHISTGDILRENVKKGTALGLKAKSYMDKGELVPDNLLIDLIKDRLSQPDCRKGFLLDGFPRTIPQAEALDEILDDINKKLDGVINIDVGSGELIRRLSGRRICRSCGASYHLVFNPPKAKDLCDSCGGELYQRDDDKEVAIKNRLDVYVRQTQPVLEYYKKKNLLIDIDGEKEIDEVTADVKAAIRKLA</sequence>
<evidence type="ECO:0000255" key="1">
    <source>
        <dbReference type="HAMAP-Rule" id="MF_00235"/>
    </source>
</evidence>